<reference key="1">
    <citation type="journal article" date="1995" name="Plant Cell Physiol.">
        <title>Structure of a gene subunit 9 of NADH dehydrogenase (nad9) in rice mitochondria and RNA editing of its transcript.</title>
        <authorList>
            <person name="Nishiwaki S."/>
            <person name="Nakazono M."/>
            <person name="Tsutsumi N."/>
            <person name="Hirai A."/>
        </authorList>
    </citation>
    <scope>NUCLEOTIDE SEQUENCE [GENOMIC DNA]</scope>
    <scope>RNA EDITING</scope>
    <source>
        <tissue>Leaf</tissue>
    </source>
</reference>
<reference key="2">
    <citation type="journal article" date="2002" name="Mol. Genet. Genomics">
        <title>The complete sequence of the rice (Oryza sativa L.) mitochondrial genome: frequent DNA sequence acquisition and loss during the evolution of flowering plants.</title>
        <authorList>
            <person name="Notsu Y."/>
            <person name="Masood S."/>
            <person name="Nishikawa T."/>
            <person name="Kubo N."/>
            <person name="Akiduki G."/>
            <person name="Nakazono M."/>
            <person name="Hirai A."/>
            <person name="Kadowaki K."/>
        </authorList>
    </citation>
    <scope>NUCLEOTIDE SEQUENCE [LARGE SCALE GENOMIC DNA]</scope>
    <source>
        <strain>cv. Nipponbare</strain>
    </source>
</reference>
<proteinExistence type="evidence at transcript level"/>
<feature type="chain" id="PRO_0000118642" description="NADH dehydrogenase [ubiquinone] iron-sulfur protein 3">
    <location>
        <begin position="1"/>
        <end position="190"/>
    </location>
</feature>
<geneLocation type="mitochondrion"/>
<evidence type="ECO:0000250" key="1"/>
<evidence type="ECO:0000269" key="2">
    <source>
    </source>
</evidence>
<evidence type="ECO:0000305" key="3"/>
<accession>Q35322</accession>
<name>NDUS3_ORYSJ</name>
<keyword id="KW-0249">Electron transport</keyword>
<keyword id="KW-0472">Membrane</keyword>
<keyword id="KW-0496">Mitochondrion</keyword>
<keyword id="KW-0999">Mitochondrion inner membrane</keyword>
<keyword id="KW-0520">NAD</keyword>
<keyword id="KW-0560">Oxidoreductase</keyword>
<keyword id="KW-1185">Reference proteome</keyword>
<keyword id="KW-0679">Respiratory chain</keyword>
<keyword id="KW-0691">RNA editing</keyword>
<keyword id="KW-1278">Translocase</keyword>
<keyword id="KW-0813">Transport</keyword>
<keyword id="KW-0830">Ubiquinone</keyword>
<gene>
    <name type="primary">NAD9</name>
</gene>
<organism>
    <name type="scientific">Oryza sativa subsp. japonica</name>
    <name type="common">Rice</name>
    <dbReference type="NCBI Taxonomy" id="39947"/>
    <lineage>
        <taxon>Eukaryota</taxon>
        <taxon>Viridiplantae</taxon>
        <taxon>Streptophyta</taxon>
        <taxon>Embryophyta</taxon>
        <taxon>Tracheophyta</taxon>
        <taxon>Spermatophyta</taxon>
        <taxon>Magnoliopsida</taxon>
        <taxon>Liliopsida</taxon>
        <taxon>Poales</taxon>
        <taxon>Poaceae</taxon>
        <taxon>BOP clade</taxon>
        <taxon>Oryzoideae</taxon>
        <taxon>Oryzeae</taxon>
        <taxon>Oryzinae</taxon>
        <taxon>Oryza</taxon>
        <taxon>Oryza sativa</taxon>
    </lineage>
</organism>
<protein>
    <recommendedName>
        <fullName>NADH dehydrogenase [ubiquinone] iron-sulfur protein 3</fullName>
        <ecNumber>7.1.1.2</ecNumber>
    </recommendedName>
    <alternativeName>
        <fullName>NADH dehydrogenase subunit 9</fullName>
    </alternativeName>
</protein>
<dbReference type="EC" id="7.1.1.2"/>
<dbReference type="EMBL" id="D50099">
    <property type="protein sequence ID" value="BAA08794.1"/>
    <property type="status" value="ALT_SEQ"/>
    <property type="molecule type" value="Genomic_DNA"/>
</dbReference>
<dbReference type="EMBL" id="BA000029">
    <property type="status" value="NOT_ANNOTATED_CDS"/>
    <property type="molecule type" value="Genomic_DNA"/>
</dbReference>
<dbReference type="PIR" id="T03231">
    <property type="entry name" value="T03231"/>
</dbReference>
<dbReference type="SMR" id="Q35322"/>
<dbReference type="FunCoup" id="Q35322">
    <property type="interactions" value="1883"/>
</dbReference>
<dbReference type="STRING" id="39947.Q35322"/>
<dbReference type="PaxDb" id="39947-Q35322"/>
<dbReference type="InParanoid" id="Q35322"/>
<dbReference type="Proteomes" id="UP000059680">
    <property type="component" value="Mitochondrion"/>
</dbReference>
<dbReference type="GO" id="GO:0005743">
    <property type="term" value="C:mitochondrial inner membrane"/>
    <property type="evidence" value="ECO:0007669"/>
    <property type="project" value="UniProtKB-SubCell"/>
</dbReference>
<dbReference type="GO" id="GO:0005739">
    <property type="term" value="C:mitochondrion"/>
    <property type="evidence" value="ECO:0000250"/>
    <property type="project" value="Gramene"/>
</dbReference>
<dbReference type="GO" id="GO:0045271">
    <property type="term" value="C:respiratory chain complex I"/>
    <property type="evidence" value="ECO:0000318"/>
    <property type="project" value="GO_Central"/>
</dbReference>
<dbReference type="GO" id="GO:0008137">
    <property type="term" value="F:NADH dehydrogenase (ubiquinone) activity"/>
    <property type="evidence" value="ECO:0007669"/>
    <property type="project" value="UniProtKB-EC"/>
</dbReference>
<dbReference type="FunFam" id="3.30.460.80:FF:000005">
    <property type="entry name" value="NADH dehydrogenase subunit 9"/>
    <property type="match status" value="1"/>
</dbReference>
<dbReference type="Gene3D" id="3.30.460.80">
    <property type="entry name" value="NADH:ubiquinone oxidoreductase, 30kDa subunit"/>
    <property type="match status" value="1"/>
</dbReference>
<dbReference type="HAMAP" id="MF_01357">
    <property type="entry name" value="NDH1_NuoC"/>
    <property type="match status" value="1"/>
</dbReference>
<dbReference type="InterPro" id="IPR010218">
    <property type="entry name" value="NADH_DH_suC"/>
</dbReference>
<dbReference type="InterPro" id="IPR037232">
    <property type="entry name" value="NADH_quin_OxRdtase_su_C/D-like"/>
</dbReference>
<dbReference type="InterPro" id="IPR001268">
    <property type="entry name" value="NADH_UbQ_OxRdtase_30kDa_su"/>
</dbReference>
<dbReference type="InterPro" id="IPR020396">
    <property type="entry name" value="NADH_UbQ_OxRdtase_CS"/>
</dbReference>
<dbReference type="NCBIfam" id="TIGR01961">
    <property type="entry name" value="NuoC_fam"/>
    <property type="match status" value="1"/>
</dbReference>
<dbReference type="NCBIfam" id="NF004733">
    <property type="entry name" value="PRK06074.1-5"/>
    <property type="match status" value="1"/>
</dbReference>
<dbReference type="PANTHER" id="PTHR10884:SF14">
    <property type="entry name" value="NADH DEHYDROGENASE [UBIQUINONE] IRON-SULFUR PROTEIN 3, MITOCHONDRIAL"/>
    <property type="match status" value="1"/>
</dbReference>
<dbReference type="PANTHER" id="PTHR10884">
    <property type="entry name" value="NADH DEHYDROGENASE UBIQUINONE IRON-SULFUR PROTEIN 3"/>
    <property type="match status" value="1"/>
</dbReference>
<dbReference type="Pfam" id="PF00329">
    <property type="entry name" value="Complex1_30kDa"/>
    <property type="match status" value="1"/>
</dbReference>
<dbReference type="SUPFAM" id="SSF143243">
    <property type="entry name" value="Nqo5-like"/>
    <property type="match status" value="1"/>
</dbReference>
<dbReference type="PROSITE" id="PS00542">
    <property type="entry name" value="COMPLEX1_30K"/>
    <property type="match status" value="1"/>
</dbReference>
<comment type="function">
    <text evidence="1">Core subunit of the mitochondrial membrane respiratory chain NADH dehydrogenase (Complex I) that is believed to belong to the minimal assembly required for catalysis. Complex I functions in the transfer of electrons from NADH to the respiratory chain. The immediate electron acceptor for the enzyme is believed to be ubiquinone (By similarity).</text>
</comment>
<comment type="catalytic activity">
    <reaction>
        <text>a ubiquinone + NADH + 5 H(+)(in) = a ubiquinol + NAD(+) + 4 H(+)(out)</text>
        <dbReference type="Rhea" id="RHEA:29091"/>
        <dbReference type="Rhea" id="RHEA-COMP:9565"/>
        <dbReference type="Rhea" id="RHEA-COMP:9566"/>
        <dbReference type="ChEBI" id="CHEBI:15378"/>
        <dbReference type="ChEBI" id="CHEBI:16389"/>
        <dbReference type="ChEBI" id="CHEBI:17976"/>
        <dbReference type="ChEBI" id="CHEBI:57540"/>
        <dbReference type="ChEBI" id="CHEBI:57945"/>
        <dbReference type="EC" id="7.1.1.2"/>
    </reaction>
</comment>
<comment type="subunit">
    <text evidence="1">Complex I is composed of about 45 different subunits. This is a component of the iron-sulfur (IP) fragment of the enzyme (By similarity).</text>
</comment>
<comment type="subcellular location">
    <subcellularLocation>
        <location>Mitochondrion inner membrane</location>
    </subcellularLocation>
</comment>
<comment type="RNA editing">
    <location>
        <position position="5" evidence="2"/>
    </location>
    <location>
        <position position="31" evidence="2"/>
    </location>
    <location>
        <position position="38" evidence="2"/>
    </location>
    <location>
        <position position="56" evidence="2"/>
    </location>
    <location>
        <position position="64" evidence="2"/>
    </location>
    <location>
        <position position="75" evidence="2"/>
    </location>
    <location>
        <position position="100" evidence="2"/>
    </location>
    <location>
        <position position="104" evidence="2"/>
    </location>
    <location>
        <position position="110" evidence="2"/>
    </location>
    <location>
        <position position="119" evidence="2"/>
    </location>
    <location>
        <position position="123" evidence="2"/>
    </location>
    <location>
        <position position="133" evidence="2"/>
    </location>
</comment>
<comment type="similarity">
    <text evidence="3">Belongs to the complex I 30 kDa subunit family.</text>
</comment>
<sequence>MDNQFIFQYSWEILPKKWVHKMKRSEHGNRFYTNTDYLFPLLCFLKWHTYTRVQVLIDICGVDYPSRKRRFEVVYNLLSTRYNSRIRVQTSADEVTRISSVVSLFPSAGWWEREVWDMFGVSFINHPDLRRILTDYGFEGHPLRKDFPLSGYVEVRYDDPEKRVVSEPIEMTQEFRYFDFASPWEQRSDG</sequence>